<sequence>MSIEGVLKEGFVTTTADKLINWTRTGSLWPMTFGLACCAVEMMHAGAARYDLDRFGVVFRPSPRQSDVMIVAGTLCNKMAPALRRVYDQMAEPRWVISMGSCANGGGYYHYSYSVVRGCDRIVPVDVYVPGCPPTAEALVYGVIQLQAKIRRTNTIARQ</sequence>
<accession>A4JGC9</accession>
<comment type="function">
    <text evidence="1">NDH-1 shuttles electrons from NADH, via FMN and iron-sulfur (Fe-S) centers, to quinones in the respiratory chain. Couples the redox reaction to proton translocation (for every two electrons transferred, four hydrogen ions are translocated across the cytoplasmic membrane), and thus conserves the redox energy in a proton gradient (By similarity).</text>
</comment>
<comment type="catalytic activity">
    <reaction evidence="2">
        <text>a quinone + NADH + 5 H(+)(in) = a quinol + NAD(+) + 4 H(+)(out)</text>
        <dbReference type="Rhea" id="RHEA:57888"/>
        <dbReference type="ChEBI" id="CHEBI:15378"/>
        <dbReference type="ChEBI" id="CHEBI:24646"/>
        <dbReference type="ChEBI" id="CHEBI:57540"/>
        <dbReference type="ChEBI" id="CHEBI:57945"/>
        <dbReference type="ChEBI" id="CHEBI:132124"/>
    </reaction>
</comment>
<comment type="cofactor">
    <cofactor evidence="2">
        <name>[4Fe-4S] cluster</name>
        <dbReference type="ChEBI" id="CHEBI:49883"/>
    </cofactor>
    <text evidence="2">Binds 1 [4Fe-4S] cluster.</text>
</comment>
<comment type="subunit">
    <text evidence="2">NDH-1 is composed of 14 different subunits. Subunits NuoB, C, D, E, F, and G constitute the peripheral sector of the complex.</text>
</comment>
<comment type="subcellular location">
    <subcellularLocation>
        <location evidence="2">Cell inner membrane</location>
        <topology evidence="2">Peripheral membrane protein</topology>
        <orientation evidence="2">Cytoplasmic side</orientation>
    </subcellularLocation>
</comment>
<comment type="similarity">
    <text evidence="2">Belongs to the complex I 20 kDa subunit family.</text>
</comment>
<reference key="1">
    <citation type="submission" date="2007-03" db="EMBL/GenBank/DDBJ databases">
        <title>Complete sequence of chromosome 1 of Burkholderia vietnamiensis G4.</title>
        <authorList>
            <consortium name="US DOE Joint Genome Institute"/>
            <person name="Copeland A."/>
            <person name="Lucas S."/>
            <person name="Lapidus A."/>
            <person name="Barry K."/>
            <person name="Detter J.C."/>
            <person name="Glavina del Rio T."/>
            <person name="Hammon N."/>
            <person name="Israni S."/>
            <person name="Dalin E."/>
            <person name="Tice H."/>
            <person name="Pitluck S."/>
            <person name="Chain P."/>
            <person name="Malfatti S."/>
            <person name="Shin M."/>
            <person name="Vergez L."/>
            <person name="Schmutz J."/>
            <person name="Larimer F."/>
            <person name="Land M."/>
            <person name="Hauser L."/>
            <person name="Kyrpides N."/>
            <person name="Tiedje J."/>
            <person name="Richardson P."/>
        </authorList>
    </citation>
    <scope>NUCLEOTIDE SEQUENCE [LARGE SCALE GENOMIC DNA]</scope>
    <source>
        <strain>G4 / LMG 22486</strain>
    </source>
</reference>
<name>NUOB_BURVG</name>
<proteinExistence type="inferred from homology"/>
<gene>
    <name evidence="2" type="primary">nuoB</name>
    <name type="ordered locus">Bcep1808_2333</name>
</gene>
<protein>
    <recommendedName>
        <fullName evidence="2">NADH-quinone oxidoreductase subunit B</fullName>
        <ecNumber evidence="2">7.1.1.-</ecNumber>
    </recommendedName>
    <alternativeName>
        <fullName evidence="2">NADH dehydrogenase I subunit B</fullName>
    </alternativeName>
    <alternativeName>
        <fullName evidence="2">NDH-1 subunit B</fullName>
    </alternativeName>
</protein>
<evidence type="ECO:0000250" key="1"/>
<evidence type="ECO:0000255" key="2">
    <source>
        <dbReference type="HAMAP-Rule" id="MF_01356"/>
    </source>
</evidence>
<keyword id="KW-0004">4Fe-4S</keyword>
<keyword id="KW-0997">Cell inner membrane</keyword>
<keyword id="KW-1003">Cell membrane</keyword>
<keyword id="KW-0408">Iron</keyword>
<keyword id="KW-0411">Iron-sulfur</keyword>
<keyword id="KW-0472">Membrane</keyword>
<keyword id="KW-0479">Metal-binding</keyword>
<keyword id="KW-0520">NAD</keyword>
<keyword id="KW-0874">Quinone</keyword>
<keyword id="KW-1278">Translocase</keyword>
<keyword id="KW-0813">Transport</keyword>
<keyword id="KW-0830">Ubiquinone</keyword>
<feature type="chain" id="PRO_0000358390" description="NADH-quinone oxidoreductase subunit B">
    <location>
        <begin position="1"/>
        <end position="159"/>
    </location>
</feature>
<feature type="binding site" evidence="2">
    <location>
        <position position="37"/>
    </location>
    <ligand>
        <name>[4Fe-4S] cluster</name>
        <dbReference type="ChEBI" id="CHEBI:49883"/>
    </ligand>
</feature>
<feature type="binding site" evidence="2">
    <location>
        <position position="38"/>
    </location>
    <ligand>
        <name>[4Fe-4S] cluster</name>
        <dbReference type="ChEBI" id="CHEBI:49883"/>
    </ligand>
</feature>
<feature type="binding site" evidence="2">
    <location>
        <position position="102"/>
    </location>
    <ligand>
        <name>[4Fe-4S] cluster</name>
        <dbReference type="ChEBI" id="CHEBI:49883"/>
    </ligand>
</feature>
<feature type="binding site" evidence="2">
    <location>
        <position position="132"/>
    </location>
    <ligand>
        <name>[4Fe-4S] cluster</name>
        <dbReference type="ChEBI" id="CHEBI:49883"/>
    </ligand>
</feature>
<organism>
    <name type="scientific">Burkholderia vietnamiensis (strain G4 / LMG 22486)</name>
    <name type="common">Burkholderia cepacia (strain R1808)</name>
    <dbReference type="NCBI Taxonomy" id="269482"/>
    <lineage>
        <taxon>Bacteria</taxon>
        <taxon>Pseudomonadati</taxon>
        <taxon>Pseudomonadota</taxon>
        <taxon>Betaproteobacteria</taxon>
        <taxon>Burkholderiales</taxon>
        <taxon>Burkholderiaceae</taxon>
        <taxon>Burkholderia</taxon>
        <taxon>Burkholderia cepacia complex</taxon>
    </lineage>
</organism>
<dbReference type="EC" id="7.1.1.-" evidence="2"/>
<dbReference type="EMBL" id="CP000614">
    <property type="protein sequence ID" value="ABO55332.1"/>
    <property type="molecule type" value="Genomic_DNA"/>
</dbReference>
<dbReference type="SMR" id="A4JGC9"/>
<dbReference type="KEGG" id="bvi:Bcep1808_2333"/>
<dbReference type="eggNOG" id="COG0377">
    <property type="taxonomic scope" value="Bacteria"/>
</dbReference>
<dbReference type="HOGENOM" id="CLU_055737_7_3_4"/>
<dbReference type="Proteomes" id="UP000002287">
    <property type="component" value="Chromosome 1"/>
</dbReference>
<dbReference type="GO" id="GO:0005886">
    <property type="term" value="C:plasma membrane"/>
    <property type="evidence" value="ECO:0007669"/>
    <property type="project" value="UniProtKB-SubCell"/>
</dbReference>
<dbReference type="GO" id="GO:0045271">
    <property type="term" value="C:respiratory chain complex I"/>
    <property type="evidence" value="ECO:0007669"/>
    <property type="project" value="TreeGrafter"/>
</dbReference>
<dbReference type="GO" id="GO:0051539">
    <property type="term" value="F:4 iron, 4 sulfur cluster binding"/>
    <property type="evidence" value="ECO:0007669"/>
    <property type="project" value="UniProtKB-KW"/>
</dbReference>
<dbReference type="GO" id="GO:0005506">
    <property type="term" value="F:iron ion binding"/>
    <property type="evidence" value="ECO:0007669"/>
    <property type="project" value="UniProtKB-UniRule"/>
</dbReference>
<dbReference type="GO" id="GO:0008137">
    <property type="term" value="F:NADH dehydrogenase (ubiquinone) activity"/>
    <property type="evidence" value="ECO:0007669"/>
    <property type="project" value="InterPro"/>
</dbReference>
<dbReference type="GO" id="GO:0050136">
    <property type="term" value="F:NADH:ubiquinone reductase (non-electrogenic) activity"/>
    <property type="evidence" value="ECO:0007669"/>
    <property type="project" value="UniProtKB-UniRule"/>
</dbReference>
<dbReference type="GO" id="GO:0048038">
    <property type="term" value="F:quinone binding"/>
    <property type="evidence" value="ECO:0007669"/>
    <property type="project" value="UniProtKB-KW"/>
</dbReference>
<dbReference type="GO" id="GO:0009060">
    <property type="term" value="P:aerobic respiration"/>
    <property type="evidence" value="ECO:0007669"/>
    <property type="project" value="TreeGrafter"/>
</dbReference>
<dbReference type="GO" id="GO:0015990">
    <property type="term" value="P:electron transport coupled proton transport"/>
    <property type="evidence" value="ECO:0007669"/>
    <property type="project" value="TreeGrafter"/>
</dbReference>
<dbReference type="FunFam" id="3.40.50.12280:FF:000001">
    <property type="entry name" value="NADH-quinone oxidoreductase subunit B 2"/>
    <property type="match status" value="1"/>
</dbReference>
<dbReference type="Gene3D" id="3.40.50.12280">
    <property type="match status" value="1"/>
</dbReference>
<dbReference type="HAMAP" id="MF_01356">
    <property type="entry name" value="NDH1_NuoB"/>
    <property type="match status" value="1"/>
</dbReference>
<dbReference type="InterPro" id="IPR006137">
    <property type="entry name" value="NADH_UbQ_OxRdtase-like_20kDa"/>
</dbReference>
<dbReference type="InterPro" id="IPR006138">
    <property type="entry name" value="NADH_UQ_OxRdtase_20Kd_su"/>
</dbReference>
<dbReference type="NCBIfam" id="TIGR01957">
    <property type="entry name" value="nuoB_fam"/>
    <property type="match status" value="1"/>
</dbReference>
<dbReference type="NCBIfam" id="NF005012">
    <property type="entry name" value="PRK06411.1"/>
    <property type="match status" value="1"/>
</dbReference>
<dbReference type="PANTHER" id="PTHR11995">
    <property type="entry name" value="NADH DEHYDROGENASE"/>
    <property type="match status" value="1"/>
</dbReference>
<dbReference type="PANTHER" id="PTHR11995:SF14">
    <property type="entry name" value="NADH DEHYDROGENASE [UBIQUINONE] IRON-SULFUR PROTEIN 7, MITOCHONDRIAL"/>
    <property type="match status" value="1"/>
</dbReference>
<dbReference type="Pfam" id="PF01058">
    <property type="entry name" value="Oxidored_q6"/>
    <property type="match status" value="1"/>
</dbReference>
<dbReference type="SUPFAM" id="SSF56770">
    <property type="entry name" value="HydA/Nqo6-like"/>
    <property type="match status" value="1"/>
</dbReference>
<dbReference type="PROSITE" id="PS01150">
    <property type="entry name" value="COMPLEX1_20K"/>
    <property type="match status" value="1"/>
</dbReference>